<feature type="chain" id="PRO_0000409012" description="Pantothenic acid transporter PanT">
    <location>
        <begin position="1"/>
        <end position="196"/>
    </location>
</feature>
<feature type="transmembrane region" description="Helical" evidence="1">
    <location>
        <begin position="10"/>
        <end position="30"/>
    </location>
</feature>
<feature type="transmembrane region" description="Helical" evidence="1">
    <location>
        <begin position="35"/>
        <end position="55"/>
    </location>
</feature>
<feature type="transmembrane region" description="Helical" evidence="1">
    <location>
        <begin position="58"/>
        <end position="78"/>
    </location>
</feature>
<feature type="transmembrane region" description="Helical" evidence="1">
    <location>
        <begin position="99"/>
        <end position="119"/>
    </location>
</feature>
<feature type="transmembrane region" description="Helical" evidence="1">
    <location>
        <begin position="131"/>
        <end position="151"/>
    </location>
</feature>
<feature type="transmembrane region" description="Helical" evidence="1">
    <location>
        <begin position="161"/>
        <end position="181"/>
    </location>
</feature>
<sequence length="196" mass="21128">MKKSKASDVAILAIFIAIMVVVQLFTQFVINVWPFPVKPTLLHLPVIIGSIILGWRKGAFLGLVWGLISFVTATIVTTPTSFLFSPFQPVIGTHHGSPWGLFIAFIPRILVGILPYFVYKIANNRLGAGLAAFAGTATNTVLVLTSIFLFFGSTLKWSLSYLLGAIVATNSLTEVIIAVILTTAIVPALTKARNNS</sequence>
<dbReference type="EMBL" id="AM406671">
    <property type="protein sequence ID" value="CAL97145.1"/>
    <property type="molecule type" value="Genomic_DNA"/>
</dbReference>
<dbReference type="RefSeq" id="WP_011834573.1">
    <property type="nucleotide sequence ID" value="NC_009004.1"/>
</dbReference>
<dbReference type="SMR" id="A2RIQ0"/>
<dbReference type="STRING" id="416870.llmg_0542"/>
<dbReference type="KEGG" id="llm:llmg_0542"/>
<dbReference type="eggNOG" id="COG4684">
    <property type="taxonomic scope" value="Bacteria"/>
</dbReference>
<dbReference type="HOGENOM" id="CLU_088550_3_0_9"/>
<dbReference type="OrthoDB" id="9813540at2"/>
<dbReference type="PhylomeDB" id="A2RIQ0"/>
<dbReference type="Proteomes" id="UP000000364">
    <property type="component" value="Chromosome"/>
</dbReference>
<dbReference type="GO" id="GO:0005886">
    <property type="term" value="C:plasma membrane"/>
    <property type="evidence" value="ECO:0000314"/>
    <property type="project" value="UniProtKB"/>
</dbReference>
<dbReference type="GO" id="GO:0022857">
    <property type="term" value="F:transmembrane transporter activity"/>
    <property type="evidence" value="ECO:0007669"/>
    <property type="project" value="InterPro"/>
</dbReference>
<dbReference type="Gene3D" id="1.10.1760.20">
    <property type="match status" value="1"/>
</dbReference>
<dbReference type="InterPro" id="IPR024529">
    <property type="entry name" value="ECF_trnsprt_substrate-spec"/>
</dbReference>
<dbReference type="Pfam" id="PF12822">
    <property type="entry name" value="ECF_trnsprt"/>
    <property type="match status" value="1"/>
</dbReference>
<comment type="function">
    <text evidence="2">Probably a pantothenic acid-binding protein that interacts with the energy-coupling factor (ECF) ABC-transporter complex. Unlike classic ABC transporters this ECF transporter provides the energy necessary to transport a number of different substrates. The substrates themselves are bound by transmembrane, not extracytoplasmic soluble proteins.</text>
</comment>
<comment type="subunit">
    <text evidence="2">In E.coli forms a stable energy-coupling factor (ECF) transporter complex composed of 2 membrane-embedded substrate-binding protein (S component), 2 ATP-binding proteins (A and A' components) and 2 transmembrane proteins (T component), probably with a stoichiometry of 2:1:1:2. May be able to interact with more than 1 S component at a time.</text>
</comment>
<comment type="subcellular location">
    <subcellularLocation>
        <location evidence="3">Cell membrane</location>
        <topology evidence="3">Multi-pass membrane protein</topology>
    </subcellularLocation>
</comment>
<keyword id="KW-1003">Cell membrane</keyword>
<keyword id="KW-0472">Membrane</keyword>
<keyword id="KW-0812">Transmembrane</keyword>
<keyword id="KW-1133">Transmembrane helix</keyword>
<keyword id="KW-0813">Transport</keyword>
<proteinExistence type="evidence at protein level"/>
<reference key="1">
    <citation type="journal article" date="2007" name="J. Bacteriol.">
        <title>The complete genome sequence of the lactic acid bacterial paradigm Lactococcus lactis subsp. cremoris MG1363.</title>
        <authorList>
            <person name="Wegmann U."/>
            <person name="O'Connell-Motherway M."/>
            <person name="Zomer A."/>
            <person name="Buist G."/>
            <person name="Shearman C."/>
            <person name="Canchaya C."/>
            <person name="Ventura M."/>
            <person name="Goesmann A."/>
            <person name="Gasson M.J."/>
            <person name="Kuipers O.P."/>
            <person name="van Sinderen D."/>
            <person name="Kok J."/>
        </authorList>
    </citation>
    <scope>NUCLEOTIDE SEQUENCE [LARGE SCALE GENOMIC DNA]</scope>
    <source>
        <strain>MG1363</strain>
    </source>
</reference>
<reference key="2">
    <citation type="journal article" date="2011" name="J. Biol. Chem.">
        <title>Quaternary structure and functional unit of energy coupling factor (ECF)-type transporters.</title>
        <authorList>
            <person name="ter Beek J."/>
            <person name="Duurkens R.H."/>
            <person name="Erkens G.B."/>
            <person name="Slotboom D.J."/>
        </authorList>
    </citation>
    <scope>SUBUNIT</scope>
    <scope>SUBCELLULAR LOCATION</scope>
    <scope>EXPRESSION IN E.COLI</scope>
    <scope>FUNCTION</scope>
    <source>
        <strain>MG1363</strain>
    </source>
</reference>
<gene>
    <name type="primary">panT</name>
    <name type="ordered locus">llmg_0542</name>
</gene>
<evidence type="ECO:0000255" key="1"/>
<evidence type="ECO:0000269" key="2">
    <source>
    </source>
</evidence>
<evidence type="ECO:0000305" key="3">
    <source>
    </source>
</evidence>
<name>PANT_LACLM</name>
<organism>
    <name type="scientific">Lactococcus lactis subsp. cremoris (strain MG1363)</name>
    <dbReference type="NCBI Taxonomy" id="416870"/>
    <lineage>
        <taxon>Bacteria</taxon>
        <taxon>Bacillati</taxon>
        <taxon>Bacillota</taxon>
        <taxon>Bacilli</taxon>
        <taxon>Lactobacillales</taxon>
        <taxon>Streptococcaceae</taxon>
        <taxon>Lactococcus</taxon>
        <taxon>Lactococcus cremoris subsp. cremoris</taxon>
    </lineage>
</organism>
<accession>A2RIQ0</accession>
<protein>
    <recommendedName>
        <fullName>Pantothenic acid transporter PanT</fullName>
    </recommendedName>
    <alternativeName>
        <fullName>Pantothenic acid ECF transporter S component PanT</fullName>
    </alternativeName>
</protein>